<proteinExistence type="inferred from homology"/>
<protein>
    <recommendedName>
        <fullName evidence="1">Cell cycle protein GpsB</fullName>
    </recommendedName>
    <alternativeName>
        <fullName evidence="1">Guiding PBP1-shuttling protein</fullName>
    </alternativeName>
</protein>
<gene>
    <name evidence="1" type="primary">gpsB</name>
    <name type="ordered locus">GTNG_1390</name>
</gene>
<dbReference type="EMBL" id="CP000557">
    <property type="protein sequence ID" value="ABO66760.1"/>
    <property type="molecule type" value="Genomic_DNA"/>
</dbReference>
<dbReference type="RefSeq" id="WP_008879323.1">
    <property type="nucleotide sequence ID" value="NC_009328.1"/>
</dbReference>
<dbReference type="SMR" id="A4IN56"/>
<dbReference type="GeneID" id="87621025"/>
<dbReference type="KEGG" id="gtn:GTNG_1390"/>
<dbReference type="eggNOG" id="COG3599">
    <property type="taxonomic scope" value="Bacteria"/>
</dbReference>
<dbReference type="HOGENOM" id="CLU_140309_1_0_9"/>
<dbReference type="Proteomes" id="UP000001578">
    <property type="component" value="Chromosome"/>
</dbReference>
<dbReference type="GO" id="GO:0005737">
    <property type="term" value="C:cytoplasm"/>
    <property type="evidence" value="ECO:0007669"/>
    <property type="project" value="UniProtKB-SubCell"/>
</dbReference>
<dbReference type="GO" id="GO:0051301">
    <property type="term" value="P:cell division"/>
    <property type="evidence" value="ECO:0007669"/>
    <property type="project" value="UniProtKB-UniRule"/>
</dbReference>
<dbReference type="GO" id="GO:0008360">
    <property type="term" value="P:regulation of cell shape"/>
    <property type="evidence" value="ECO:0007669"/>
    <property type="project" value="UniProtKB-UniRule"/>
</dbReference>
<dbReference type="Gene3D" id="6.10.250.660">
    <property type="match status" value="1"/>
</dbReference>
<dbReference type="HAMAP" id="MF_02011">
    <property type="entry name" value="GpsB"/>
    <property type="match status" value="1"/>
</dbReference>
<dbReference type="InterPro" id="IPR011229">
    <property type="entry name" value="Cell_cycle_GpsB"/>
</dbReference>
<dbReference type="InterPro" id="IPR019933">
    <property type="entry name" value="DivIVA_domain"/>
</dbReference>
<dbReference type="InterPro" id="IPR007793">
    <property type="entry name" value="DivIVA_fam"/>
</dbReference>
<dbReference type="NCBIfam" id="TIGR03544">
    <property type="entry name" value="DivI1A_domain"/>
    <property type="match status" value="1"/>
</dbReference>
<dbReference type="NCBIfam" id="NF010725">
    <property type="entry name" value="PRK14127.1"/>
    <property type="match status" value="1"/>
</dbReference>
<dbReference type="PANTHER" id="PTHR35794:SF1">
    <property type="entry name" value="CELL CYCLE PROTEIN GPSB"/>
    <property type="match status" value="1"/>
</dbReference>
<dbReference type="PANTHER" id="PTHR35794">
    <property type="entry name" value="CELL DIVISION PROTEIN DIVIVA"/>
    <property type="match status" value="1"/>
</dbReference>
<dbReference type="Pfam" id="PF05103">
    <property type="entry name" value="DivIVA"/>
    <property type="match status" value="1"/>
</dbReference>
<dbReference type="PIRSF" id="PIRSF029938">
    <property type="entry name" value="UCP029938"/>
    <property type="match status" value="1"/>
</dbReference>
<dbReference type="SUPFAM" id="SSF75704">
    <property type="entry name" value="Mitotic arrest deficient-like 1, Mad1"/>
    <property type="match status" value="1"/>
</dbReference>
<name>GPSB_GEOTN</name>
<reference key="1">
    <citation type="journal article" date="2007" name="Proc. Natl. Acad. Sci. U.S.A.">
        <title>Genome and proteome of long-chain alkane degrading Geobacillus thermodenitrificans NG80-2 isolated from a deep-subsurface oil reservoir.</title>
        <authorList>
            <person name="Feng L."/>
            <person name="Wang W."/>
            <person name="Cheng J."/>
            <person name="Ren Y."/>
            <person name="Zhao G."/>
            <person name="Gao C."/>
            <person name="Tang Y."/>
            <person name="Liu X."/>
            <person name="Han W."/>
            <person name="Peng X."/>
            <person name="Liu R."/>
            <person name="Wang L."/>
        </authorList>
    </citation>
    <scope>NUCLEOTIDE SEQUENCE [LARGE SCALE GENOMIC DNA]</scope>
    <source>
        <strain>NG80-2</strain>
    </source>
</reference>
<comment type="function">
    <text evidence="1">Divisome component that associates with the complex late in its assembly, after the Z-ring is formed, and is dependent on DivIC and PBP2B for its recruitment to the divisome. Together with EzrA, is a key component of the system that regulates PBP1 localization during cell cycle progression. Its main role could be the removal of PBP1 from the cell pole after pole maturation is completed. Also contributes to the recruitment of PBP1 to the division complex. Not essential for septum formation.</text>
</comment>
<comment type="subunit">
    <text evidence="1">Forms polymers through the coiled coil domains. Interacts with PBP1, MreC and EzrA.</text>
</comment>
<comment type="subcellular location">
    <subcellularLocation>
        <location evidence="1">Cytoplasm</location>
    </subcellularLocation>
    <text evidence="1">Shuttles between the lateral wall and the division site in a cell cycle-dependent manner.</text>
</comment>
<comment type="similarity">
    <text evidence="1">Belongs to the GpsB family.</text>
</comment>
<keyword id="KW-0131">Cell cycle</keyword>
<keyword id="KW-0132">Cell division</keyword>
<keyword id="KW-0133">Cell shape</keyword>
<keyword id="KW-0175">Coiled coil</keyword>
<keyword id="KW-0963">Cytoplasm</keyword>
<evidence type="ECO:0000255" key="1">
    <source>
        <dbReference type="HAMAP-Rule" id="MF_02011"/>
    </source>
</evidence>
<organism>
    <name type="scientific">Geobacillus thermodenitrificans (strain NG80-2)</name>
    <dbReference type="NCBI Taxonomy" id="420246"/>
    <lineage>
        <taxon>Bacteria</taxon>
        <taxon>Bacillati</taxon>
        <taxon>Bacillota</taxon>
        <taxon>Bacilli</taxon>
        <taxon>Bacillales</taxon>
        <taxon>Anoxybacillaceae</taxon>
        <taxon>Geobacillus</taxon>
    </lineage>
</organism>
<accession>A4IN56</accession>
<sequence>MSANQVKLTPKDILEKEFKVSMRGYNQDEVDQFLDIVIKDYEAFQQELDELRQENARLKRQVEELQKRPTTPTGTTNYDILQRLSNLEKHVFGRKLYE</sequence>
<feature type="chain" id="PRO_0000337918" description="Cell cycle protein GpsB">
    <location>
        <begin position="1"/>
        <end position="98"/>
    </location>
</feature>
<feature type="coiled-coil region" evidence="1">
    <location>
        <begin position="34"/>
        <end position="71"/>
    </location>
</feature>